<protein>
    <recommendedName>
        <fullName evidence="1">eIF5-mimic protein 2</fullName>
    </recommendedName>
    <alternativeName>
        <fullName>Basic leucine zipper and W2 domain-containing protein 1</fullName>
    </alternativeName>
</protein>
<comment type="function">
    <text evidence="1">Translation initiation regulator which may repress repeat-associated non-AUG (RAN) initiated translation probably by acting as a competitive inhibitor of eukaryotic translation initiation factor 5 (EIF5) function (By similarity). Enhances histone H4 gene transcription but does not seem to bind DNA directly (By similarity).</text>
</comment>
<comment type="similarity">
    <text evidence="4">Belongs to the BZW family.</text>
</comment>
<dbReference type="EMBL" id="AJ719647">
    <property type="protein sequence ID" value="CAG31306.1"/>
    <property type="molecule type" value="mRNA"/>
</dbReference>
<dbReference type="RefSeq" id="NP_001006516.1">
    <property type="nucleotide sequence ID" value="NM_001006516.2"/>
</dbReference>
<dbReference type="FunCoup" id="Q5ZLT7">
    <property type="interactions" value="2814"/>
</dbReference>
<dbReference type="STRING" id="9031.ENSGALP00000032837"/>
<dbReference type="PaxDb" id="9031-ENSGALP00000032837"/>
<dbReference type="GeneID" id="424073"/>
<dbReference type="KEGG" id="gga:424073"/>
<dbReference type="CTD" id="9689"/>
<dbReference type="VEuPathDB" id="HostDB:geneid_424073"/>
<dbReference type="eggNOG" id="KOG2297">
    <property type="taxonomic scope" value="Eukaryota"/>
</dbReference>
<dbReference type="HOGENOM" id="CLU_032849_0_1_1"/>
<dbReference type="InParanoid" id="Q5ZLT7"/>
<dbReference type="OMA" id="TEFCLFR"/>
<dbReference type="OrthoDB" id="1727522at2759"/>
<dbReference type="PhylomeDB" id="Q5ZLT7"/>
<dbReference type="PRO" id="PR:Q5ZLT7"/>
<dbReference type="Proteomes" id="UP000000539">
    <property type="component" value="Chromosome 7"/>
</dbReference>
<dbReference type="Bgee" id="ENSGALG00000008220">
    <property type="expression patterns" value="Expressed in spermatocyte and 13 other cell types or tissues"/>
</dbReference>
<dbReference type="GO" id="GO:0005737">
    <property type="term" value="C:cytoplasm"/>
    <property type="evidence" value="ECO:0000318"/>
    <property type="project" value="GO_Central"/>
</dbReference>
<dbReference type="GO" id="GO:0006446">
    <property type="term" value="P:regulation of translational initiation"/>
    <property type="evidence" value="ECO:0000250"/>
    <property type="project" value="UniProtKB"/>
</dbReference>
<dbReference type="CDD" id="cd11560">
    <property type="entry name" value="W2_eIF5C_like"/>
    <property type="match status" value="1"/>
</dbReference>
<dbReference type="FunFam" id="1.25.40.180:FF:000006">
    <property type="entry name" value="Basic leucine zipper and W2 domain-containing protein 1"/>
    <property type="match status" value="1"/>
</dbReference>
<dbReference type="Gene3D" id="1.25.40.180">
    <property type="match status" value="1"/>
</dbReference>
<dbReference type="InterPro" id="IPR016024">
    <property type="entry name" value="ARM-type_fold"/>
</dbReference>
<dbReference type="InterPro" id="IPR051245">
    <property type="entry name" value="eIF5-mimic_regulator"/>
</dbReference>
<dbReference type="InterPro" id="IPR043510">
    <property type="entry name" value="W2_BZW1/2"/>
</dbReference>
<dbReference type="InterPro" id="IPR003307">
    <property type="entry name" value="W2_domain"/>
</dbReference>
<dbReference type="PANTHER" id="PTHR14208">
    <property type="entry name" value="BASIC LEUCINE ZIPPER AND W2 DOMAIN-CONTAINING PROTEIN"/>
    <property type="match status" value="1"/>
</dbReference>
<dbReference type="PANTHER" id="PTHR14208:SF0">
    <property type="entry name" value="EIF5-MIMIC PROTEIN 2"/>
    <property type="match status" value="1"/>
</dbReference>
<dbReference type="Pfam" id="PF25504">
    <property type="entry name" value="HEAT_5MP1_2"/>
    <property type="match status" value="1"/>
</dbReference>
<dbReference type="Pfam" id="PF02020">
    <property type="entry name" value="W2"/>
    <property type="match status" value="1"/>
</dbReference>
<dbReference type="SMART" id="SM00515">
    <property type="entry name" value="eIF5C"/>
    <property type="match status" value="1"/>
</dbReference>
<dbReference type="SUPFAM" id="SSF48371">
    <property type="entry name" value="ARM repeat"/>
    <property type="match status" value="1"/>
</dbReference>
<dbReference type="PROSITE" id="PS51363">
    <property type="entry name" value="W2"/>
    <property type="match status" value="1"/>
</dbReference>
<sequence>MNQKQQKPTLSGQRFKTRKRDEKERFDPTQFQDCIIQGLTETGTDLEAVAKFLDASGAKLDYRRYAETLFDILVAGGMLAPGGTLADDMTRTDVCVFAAQEDLETMQAFAQVFNKLIRRYKYLEKGFEDEVKKLLLFLKGFSESERNKLAMLTGILLANGTLNASILNSLYNENLVKEGVSAAFAVKLFKSWINEKDINAVAVSLRKVNMDNRLMELFPANKQSVEHFSKYFTEAGLKELSEYVRNQQTIGARKELQKELQEQMSRGDPFKDIILYVKEEMKKNNISEQTVIAIIWSSVMSTVEWNKKEELVAEQAIKHLKQYSPLLAAFTTQGQSELTLLLKIQEYCYDNIHFMKAFQKIVVLFYKAEVLSEEPILKWYKDAHLAKGKSVFLEQMKKFVEWLKNAEEESESEAEEGD</sequence>
<name>5MP2_CHICK</name>
<proteinExistence type="evidence at transcript level"/>
<evidence type="ECO:0000250" key="1">
    <source>
        <dbReference type="UniProtKB" id="Q7L1Q6"/>
    </source>
</evidence>
<evidence type="ECO:0000255" key="2">
    <source>
        <dbReference type="PROSITE-ProRule" id="PRU00695"/>
    </source>
</evidence>
<evidence type="ECO:0000256" key="3">
    <source>
        <dbReference type="SAM" id="MobiDB-lite"/>
    </source>
</evidence>
<evidence type="ECO:0000305" key="4"/>
<organism>
    <name type="scientific">Gallus gallus</name>
    <name type="common">Chicken</name>
    <dbReference type="NCBI Taxonomy" id="9031"/>
    <lineage>
        <taxon>Eukaryota</taxon>
        <taxon>Metazoa</taxon>
        <taxon>Chordata</taxon>
        <taxon>Craniata</taxon>
        <taxon>Vertebrata</taxon>
        <taxon>Euteleostomi</taxon>
        <taxon>Archelosauria</taxon>
        <taxon>Archosauria</taxon>
        <taxon>Dinosauria</taxon>
        <taxon>Saurischia</taxon>
        <taxon>Theropoda</taxon>
        <taxon>Coelurosauria</taxon>
        <taxon>Aves</taxon>
        <taxon>Neognathae</taxon>
        <taxon>Galloanserae</taxon>
        <taxon>Galliformes</taxon>
        <taxon>Phasianidae</taxon>
        <taxon>Phasianinae</taxon>
        <taxon>Gallus</taxon>
    </lineage>
</organism>
<accession>Q5ZLT7</accession>
<gene>
    <name type="primary">BZW1</name>
    <name evidence="1" type="synonym">5MP2</name>
    <name type="ORF">RCJMB04_4o16</name>
</gene>
<feature type="chain" id="PRO_0000254613" description="eIF5-mimic protein 2">
    <location>
        <begin position="1"/>
        <end position="418"/>
    </location>
</feature>
<feature type="domain" description="W2" evidence="2">
    <location>
        <begin position="246"/>
        <end position="413"/>
    </location>
</feature>
<feature type="region of interest" description="Disordered" evidence="3">
    <location>
        <begin position="1"/>
        <end position="25"/>
    </location>
</feature>
<feature type="compositionally biased region" description="Polar residues" evidence="3">
    <location>
        <begin position="1"/>
        <end position="14"/>
    </location>
</feature>
<keyword id="KW-0010">Activator</keyword>
<keyword id="KW-1185">Reference proteome</keyword>
<keyword id="KW-0804">Transcription</keyword>
<keyword id="KW-0805">Transcription regulation</keyword>
<keyword id="KW-0810">Translation regulation</keyword>
<reference key="1">
    <citation type="journal article" date="2005" name="Genome Biol.">
        <title>Full-length cDNAs from chicken bursal lymphocytes to facilitate gene function analysis.</title>
        <authorList>
            <person name="Caldwell R.B."/>
            <person name="Kierzek A.M."/>
            <person name="Arakawa H."/>
            <person name="Bezzubov Y."/>
            <person name="Zaim J."/>
            <person name="Fiedler P."/>
            <person name="Kutter S."/>
            <person name="Blagodatski A."/>
            <person name="Kostovska D."/>
            <person name="Koter M."/>
            <person name="Plachy J."/>
            <person name="Carninci P."/>
            <person name="Hayashizaki Y."/>
            <person name="Buerstedde J.-M."/>
        </authorList>
    </citation>
    <scope>NUCLEOTIDE SEQUENCE [LARGE SCALE MRNA]</scope>
    <source>
        <strain>CB</strain>
        <tissue>Bursa of Fabricius</tissue>
    </source>
</reference>